<reference key="1">
    <citation type="submission" date="2008-11" db="EMBL/GenBank/DDBJ databases">
        <title>Globe artichoke ESTs from the compositae genome project http://compgenomics.ucdavis.edu/.</title>
        <authorList>
            <person name="Tang S."/>
            <person name="Gao W."/>
            <person name="Kozik A."/>
            <person name="Matvienko M."/>
            <person name="Michelmore R.W."/>
            <person name="Knapp S.J."/>
            <person name="Rieseberg L."/>
        </authorList>
    </citation>
    <scope>NUCLEOTIDE SEQUENCE [LARGE SCALE MRNA]</scope>
    <source>
        <strain>cv. Green Globe</strain>
    </source>
</reference>
<reference key="2">
    <citation type="journal article" date="2014" name="Plant Physiol.">
        <title>Functional and evolutionary analysis of the CASPARIAN STRIP MEMBRANE DOMAIN PROTEIN family.</title>
        <authorList>
            <person name="Roppolo D."/>
            <person name="Boeckmann B."/>
            <person name="Pfister A."/>
            <person name="Boutet E."/>
            <person name="Rubio M.C."/>
            <person name="Denervaud-Tendon V."/>
            <person name="Vermeer J.E."/>
            <person name="Gheyselinck J."/>
            <person name="Xenarios I."/>
            <person name="Geldner N."/>
        </authorList>
    </citation>
    <scope>GENE FAMILY</scope>
    <scope>NOMENCLATURE</scope>
</reference>
<organism>
    <name type="scientific">Cynara cardunculus var. scolymus</name>
    <name type="common">Globe artichoke</name>
    <name type="synonym">Cynara scolymus</name>
    <dbReference type="NCBI Taxonomy" id="59895"/>
    <lineage>
        <taxon>Eukaryota</taxon>
        <taxon>Viridiplantae</taxon>
        <taxon>Streptophyta</taxon>
        <taxon>Embryophyta</taxon>
        <taxon>Tracheophyta</taxon>
        <taxon>Spermatophyta</taxon>
        <taxon>Magnoliopsida</taxon>
        <taxon>eudicotyledons</taxon>
        <taxon>Gunneridae</taxon>
        <taxon>Pentapetalae</taxon>
        <taxon>asterids</taxon>
        <taxon>campanulids</taxon>
        <taxon>Asterales</taxon>
        <taxon>Asteraceae</taxon>
        <taxon>Carduoideae</taxon>
        <taxon>Cardueae</taxon>
        <taxon>Carduinae</taxon>
        <taxon>Cynara</taxon>
    </lineage>
</organism>
<proteinExistence type="evidence at transcript level"/>
<evidence type="ECO:0000250" key="1"/>
<evidence type="ECO:0000255" key="2"/>
<evidence type="ECO:0000256" key="3">
    <source>
        <dbReference type="SAM" id="MobiDB-lite"/>
    </source>
</evidence>
<evidence type="ECO:0000305" key="4"/>
<feature type="chain" id="PRO_0000417766" description="Casparian strip membrane protein 1">
    <location>
        <begin position="1"/>
        <end position="207"/>
    </location>
</feature>
<feature type="topological domain" description="Cytoplasmic" evidence="2">
    <location>
        <begin position="1"/>
        <end position="48"/>
    </location>
</feature>
<feature type="transmembrane region" description="Helical" evidence="2">
    <location>
        <begin position="49"/>
        <end position="69"/>
    </location>
</feature>
<feature type="topological domain" description="Extracellular" evidence="2">
    <location>
        <begin position="70"/>
        <end position="98"/>
    </location>
</feature>
<feature type="transmembrane region" description="Helical" evidence="2">
    <location>
        <begin position="99"/>
        <end position="119"/>
    </location>
</feature>
<feature type="topological domain" description="Cytoplasmic" evidence="2">
    <location>
        <begin position="120"/>
        <end position="131"/>
    </location>
</feature>
<feature type="transmembrane region" description="Helical" evidence="2">
    <location>
        <begin position="132"/>
        <end position="152"/>
    </location>
</feature>
<feature type="topological domain" description="Extracellular" evidence="2">
    <location>
        <begin position="153"/>
        <end position="184"/>
    </location>
</feature>
<feature type="transmembrane region" description="Helical" evidence="2">
    <location>
        <begin position="185"/>
        <end position="205"/>
    </location>
</feature>
<feature type="topological domain" description="Cytoplasmic" evidence="2">
    <location>
        <begin position="206"/>
        <end position="207"/>
    </location>
</feature>
<feature type="region of interest" description="Disordered" evidence="3">
    <location>
        <begin position="1"/>
        <end position="20"/>
    </location>
</feature>
<feature type="compositionally biased region" description="Polar residues" evidence="3">
    <location>
        <begin position="1"/>
        <end position="12"/>
    </location>
</feature>
<dbReference type="EMBL" id="GE598352">
    <property type="status" value="NOT_ANNOTATED_CDS"/>
    <property type="molecule type" value="mRNA"/>
</dbReference>
<dbReference type="GO" id="GO:0005886">
    <property type="term" value="C:plasma membrane"/>
    <property type="evidence" value="ECO:0007669"/>
    <property type="project" value="UniProtKB-SubCell"/>
</dbReference>
<dbReference type="GO" id="GO:0071555">
    <property type="term" value="P:cell wall organization"/>
    <property type="evidence" value="ECO:0007669"/>
    <property type="project" value="UniProtKB-KW"/>
</dbReference>
<dbReference type="InterPro" id="IPR006459">
    <property type="entry name" value="CASP/CASPL"/>
</dbReference>
<dbReference type="InterPro" id="IPR006702">
    <property type="entry name" value="CASP_dom"/>
</dbReference>
<dbReference type="InterPro" id="IPR044173">
    <property type="entry name" value="CASPL"/>
</dbReference>
<dbReference type="NCBIfam" id="TIGR01569">
    <property type="entry name" value="A_tha_TIGR01569"/>
    <property type="match status" value="1"/>
</dbReference>
<dbReference type="PANTHER" id="PTHR36488:SF11">
    <property type="entry name" value="CASP-LIKE PROTEIN"/>
    <property type="match status" value="1"/>
</dbReference>
<dbReference type="PANTHER" id="PTHR36488">
    <property type="entry name" value="CASP-LIKE PROTEIN 1U1"/>
    <property type="match status" value="1"/>
</dbReference>
<dbReference type="Pfam" id="PF04535">
    <property type="entry name" value="CASP_dom"/>
    <property type="match status" value="1"/>
</dbReference>
<protein>
    <recommendedName>
        <fullName>Casparian strip membrane protein 1</fullName>
        <shortName>CsCASP1</shortName>
    </recommendedName>
</protein>
<name>CASP1_CYNCS</name>
<sequence>MEADSTTINVTETPKERKGKAPLLAAPPASSGVKRVLQKAPKGGYKRGLAVFDVVLRLAGIATALGAAIAMGSTDQTLPFFTQFFQFKAEFDDLPAFTFFVIANAITAAYLALTIPISIVCIIRPHLVAPRVLLIFLDTVMVALTTAAAGGTASIVYLAHNGNSDANWPAICQQFNDXCQKVSGAVVASFLTVVVLMLLIVLSAFAL</sequence>
<comment type="function">
    <text evidence="1">Regulates membrane-cell wall junctions and localized cell wall deposition. Required for establishment of the Casparian strip membrane domain (CSD) and the subsequent formation of Casparian strips, a cell wall modification of the root endodermis that determines an apoplastic barrier between the intraorganismal apoplasm and the extraorganismal apoplasm and prevents lateral diffusion (By similarity).</text>
</comment>
<comment type="subunit">
    <text evidence="1">Homodimer and heterodimers.</text>
</comment>
<comment type="subcellular location">
    <subcellularLocation>
        <location evidence="1">Cell membrane</location>
        <topology evidence="1">Multi-pass membrane protein</topology>
    </subcellularLocation>
    <text evidence="1">Very restricted localization following a belt shape within the plasma membrane which coincides with the position of the Casparian strip membrane domain in the root endodermis.</text>
</comment>
<comment type="similarity">
    <text evidence="4">Belongs to the Casparian strip membrane proteins (CASP) family.</text>
</comment>
<keyword id="KW-1003">Cell membrane</keyword>
<keyword id="KW-0961">Cell wall biogenesis/degradation</keyword>
<keyword id="KW-0472">Membrane</keyword>
<keyword id="KW-0812">Transmembrane</keyword>
<keyword id="KW-1133">Transmembrane helix</keyword>
<accession>P0DI62</accession>